<proteinExistence type="inferred from homology"/>
<gene>
    <name type="primary">BTN1</name>
    <name type="ordered locus">DEHA2A04796g</name>
</gene>
<evidence type="ECO:0000250" key="1"/>
<evidence type="ECO:0000255" key="2"/>
<evidence type="ECO:0000256" key="3">
    <source>
        <dbReference type="SAM" id="MobiDB-lite"/>
    </source>
</evidence>
<evidence type="ECO:0000305" key="4"/>
<feature type="signal peptide" evidence="2">
    <location>
        <begin position="1"/>
        <end position="33"/>
    </location>
</feature>
<feature type="chain" id="PRO_0000256261" description="Protein BTN1">
    <location>
        <begin position="34"/>
        <end position="414"/>
    </location>
</feature>
<feature type="transmembrane region" description="Helical" evidence="2">
    <location>
        <begin position="48"/>
        <end position="68"/>
    </location>
</feature>
<feature type="transmembrane region" description="Helical" evidence="2">
    <location>
        <begin position="74"/>
        <end position="94"/>
    </location>
</feature>
<feature type="transmembrane region" description="Helical" evidence="2">
    <location>
        <begin position="100"/>
        <end position="120"/>
    </location>
</feature>
<feature type="transmembrane region" description="Helical" evidence="2">
    <location>
        <begin position="137"/>
        <end position="157"/>
    </location>
</feature>
<feature type="transmembrane region" description="Helical" evidence="2">
    <location>
        <begin position="159"/>
        <end position="179"/>
    </location>
</feature>
<feature type="transmembrane region" description="Helical" evidence="2">
    <location>
        <begin position="242"/>
        <end position="262"/>
    </location>
</feature>
<feature type="transmembrane region" description="Helical" evidence="2">
    <location>
        <begin position="281"/>
        <end position="301"/>
    </location>
</feature>
<feature type="transmembrane region" description="Helical" evidence="2">
    <location>
        <begin position="306"/>
        <end position="326"/>
    </location>
</feature>
<feature type="transmembrane region" description="Helical" evidence="2">
    <location>
        <begin position="332"/>
        <end position="352"/>
    </location>
</feature>
<feature type="transmembrane region" description="Helical" evidence="2">
    <location>
        <begin position="368"/>
        <end position="388"/>
    </location>
</feature>
<feature type="region of interest" description="Disordered" evidence="3">
    <location>
        <begin position="195"/>
        <end position="214"/>
    </location>
</feature>
<accession>Q6BZ39</accession>
<reference key="1">
    <citation type="journal article" date="2004" name="Nature">
        <title>Genome evolution in yeasts.</title>
        <authorList>
            <person name="Dujon B."/>
            <person name="Sherman D."/>
            <person name="Fischer G."/>
            <person name="Durrens P."/>
            <person name="Casaregola S."/>
            <person name="Lafontaine I."/>
            <person name="de Montigny J."/>
            <person name="Marck C."/>
            <person name="Neuveglise C."/>
            <person name="Talla E."/>
            <person name="Goffard N."/>
            <person name="Frangeul L."/>
            <person name="Aigle M."/>
            <person name="Anthouard V."/>
            <person name="Babour A."/>
            <person name="Barbe V."/>
            <person name="Barnay S."/>
            <person name="Blanchin S."/>
            <person name="Beckerich J.-M."/>
            <person name="Beyne E."/>
            <person name="Bleykasten C."/>
            <person name="Boisrame A."/>
            <person name="Boyer J."/>
            <person name="Cattolico L."/>
            <person name="Confanioleri F."/>
            <person name="de Daruvar A."/>
            <person name="Despons L."/>
            <person name="Fabre E."/>
            <person name="Fairhead C."/>
            <person name="Ferry-Dumazet H."/>
            <person name="Groppi A."/>
            <person name="Hantraye F."/>
            <person name="Hennequin C."/>
            <person name="Jauniaux N."/>
            <person name="Joyet P."/>
            <person name="Kachouri R."/>
            <person name="Kerrest A."/>
            <person name="Koszul R."/>
            <person name="Lemaire M."/>
            <person name="Lesur I."/>
            <person name="Ma L."/>
            <person name="Muller H."/>
            <person name="Nicaud J.-M."/>
            <person name="Nikolski M."/>
            <person name="Oztas S."/>
            <person name="Ozier-Kalogeropoulos O."/>
            <person name="Pellenz S."/>
            <person name="Potier S."/>
            <person name="Richard G.-F."/>
            <person name="Straub M.-L."/>
            <person name="Suleau A."/>
            <person name="Swennen D."/>
            <person name="Tekaia F."/>
            <person name="Wesolowski-Louvel M."/>
            <person name="Westhof E."/>
            <person name="Wirth B."/>
            <person name="Zeniou-Meyer M."/>
            <person name="Zivanovic Y."/>
            <person name="Bolotin-Fukuhara M."/>
            <person name="Thierry A."/>
            <person name="Bouchier C."/>
            <person name="Caudron B."/>
            <person name="Scarpelli C."/>
            <person name="Gaillardin C."/>
            <person name="Weissenbach J."/>
            <person name="Wincker P."/>
            <person name="Souciet J.-L."/>
        </authorList>
    </citation>
    <scope>NUCLEOTIDE SEQUENCE [LARGE SCALE GENOMIC DNA]</scope>
    <source>
        <strain>ATCC 36239 / CBS 767 / BCRC 21394 / JCM 1990 / NBRC 0083 / IGC 2968</strain>
    </source>
</reference>
<name>BTN1_DEBHA</name>
<organism>
    <name type="scientific">Debaryomyces hansenii (strain ATCC 36239 / CBS 767 / BCRC 21394 / JCM 1990 / NBRC 0083 / IGC 2968)</name>
    <name type="common">Yeast</name>
    <name type="synonym">Torulaspora hansenii</name>
    <dbReference type="NCBI Taxonomy" id="284592"/>
    <lineage>
        <taxon>Eukaryota</taxon>
        <taxon>Fungi</taxon>
        <taxon>Dikarya</taxon>
        <taxon>Ascomycota</taxon>
        <taxon>Saccharomycotina</taxon>
        <taxon>Pichiomycetes</taxon>
        <taxon>Debaryomycetaceae</taxon>
        <taxon>Debaryomyces</taxon>
    </lineage>
</organism>
<keyword id="KW-0029">Amino-acid transport</keyword>
<keyword id="KW-0472">Membrane</keyword>
<keyword id="KW-1185">Reference proteome</keyword>
<keyword id="KW-0732">Signal</keyword>
<keyword id="KW-0812">Transmembrane</keyword>
<keyword id="KW-1133">Transmembrane helix</keyword>
<keyword id="KW-0813">Transport</keyword>
<keyword id="KW-0926">Vacuole</keyword>
<protein>
    <recommendedName>
        <fullName>Protein BTN1</fullName>
    </recommendedName>
</protein>
<dbReference type="EMBL" id="CR382133">
    <property type="protein sequence ID" value="CAG84485.2"/>
    <property type="molecule type" value="Genomic_DNA"/>
</dbReference>
<dbReference type="RefSeq" id="XP_456530.2">
    <property type="nucleotide sequence ID" value="XM_456530.1"/>
</dbReference>
<dbReference type="FunCoup" id="Q6BZ39">
    <property type="interactions" value="118"/>
</dbReference>
<dbReference type="STRING" id="284592.Q6BZ39"/>
<dbReference type="GeneID" id="2899817"/>
<dbReference type="KEGG" id="dha:DEHA2A04796g"/>
<dbReference type="VEuPathDB" id="FungiDB:DEHA2A04796g"/>
<dbReference type="eggNOG" id="KOG3880">
    <property type="taxonomic scope" value="Eukaryota"/>
</dbReference>
<dbReference type="HOGENOM" id="CLU_029663_1_2_1"/>
<dbReference type="InParanoid" id="Q6BZ39"/>
<dbReference type="OMA" id="WLCNWQV"/>
<dbReference type="OrthoDB" id="5965864at2759"/>
<dbReference type="Proteomes" id="UP000000599">
    <property type="component" value="Chromosome A"/>
</dbReference>
<dbReference type="GO" id="GO:0000324">
    <property type="term" value="C:fungal-type vacuole"/>
    <property type="evidence" value="ECO:0007669"/>
    <property type="project" value="EnsemblFungi"/>
</dbReference>
<dbReference type="GO" id="GO:0005774">
    <property type="term" value="C:vacuolar membrane"/>
    <property type="evidence" value="ECO:0007669"/>
    <property type="project" value="UniProtKB-SubCell"/>
</dbReference>
<dbReference type="GO" id="GO:1903826">
    <property type="term" value="P:L-arginine transmembrane transport"/>
    <property type="evidence" value="ECO:0007669"/>
    <property type="project" value="EnsemblFungi"/>
</dbReference>
<dbReference type="GO" id="GO:0015819">
    <property type="term" value="P:lysine transport"/>
    <property type="evidence" value="ECO:0007669"/>
    <property type="project" value="EnsemblFungi"/>
</dbReference>
<dbReference type="GO" id="GO:0051453">
    <property type="term" value="P:regulation of intracellular pH"/>
    <property type="evidence" value="ECO:0007669"/>
    <property type="project" value="EnsemblFungi"/>
</dbReference>
<dbReference type="Gene3D" id="1.20.1250.20">
    <property type="entry name" value="MFS general substrate transporter like domains"/>
    <property type="match status" value="1"/>
</dbReference>
<dbReference type="InterPro" id="IPR003492">
    <property type="entry name" value="Battenin_disease_Cln3"/>
</dbReference>
<dbReference type="InterPro" id="IPR018460">
    <property type="entry name" value="Battenin_disease_Cln3_subgr"/>
</dbReference>
<dbReference type="InterPro" id="IPR036259">
    <property type="entry name" value="MFS_trans_sf"/>
</dbReference>
<dbReference type="PANTHER" id="PTHR10981">
    <property type="entry name" value="BATTENIN"/>
    <property type="match status" value="1"/>
</dbReference>
<dbReference type="PANTHER" id="PTHR10981:SF0">
    <property type="entry name" value="BATTENIN"/>
    <property type="match status" value="1"/>
</dbReference>
<dbReference type="Pfam" id="PF02487">
    <property type="entry name" value="CLN3"/>
    <property type="match status" value="1"/>
</dbReference>
<dbReference type="PIRSF" id="PIRSF015974">
    <property type="entry name" value="CLN3_BTN1"/>
    <property type="match status" value="1"/>
</dbReference>
<dbReference type="PRINTS" id="PR01315">
    <property type="entry name" value="BATTENIN"/>
</dbReference>
<dbReference type="SUPFAM" id="SSF103473">
    <property type="entry name" value="MFS general substrate transporter"/>
    <property type="match status" value="1"/>
</dbReference>
<sequence length="414" mass="45507">MQLLIPESRIVFASFFIFGLLNNILYVVILSAAIDLVGSATPKATVLLADIIPSFTIKVMAPFFVGLISYRTRIWMLVGLSSFGMLVISLTSDESINAKIVGICMASLSSGLGEVTFLQLTHFYQREYSISGFSSGTGGAGLLGSFVFMLLTNMLGMKVWVVLLLFAVLPLGFLMAFYVMLPKARGGGGDEPGYEALDSLDERSDPSSNASFSSSQTVSLKGHVVSTIKNILPLIRPYMLPLCLVYVSEYIINQGISPTLLFPLDELPHWLFSSYRDIYVVYGFMYQLGVFVSRSSISFGIRIKRLYLLSVLQFANVVITVYQSVHDKPFSSVWLLLALIFYEGLLGGFSYVNTFMSVSEEVSKSKREFSMGCVGISDTFGILLAGCINWSLEPHLCSLQVNRGRDWCLNGGSA</sequence>
<comment type="function">
    <text evidence="1">Involved in vacuolar transport and vacuole pH homeostasis. Also required for cytokinesis (By similarity).</text>
</comment>
<comment type="subcellular location">
    <subcellularLocation>
        <location evidence="1">Vacuole membrane</location>
        <topology evidence="1">Multi-pass membrane protein</topology>
    </subcellularLocation>
</comment>
<comment type="similarity">
    <text evidence="4">Belongs to the battenin family.</text>
</comment>